<proteinExistence type="inferred from homology"/>
<sequence length="652" mass="73505">MATDAHKETLEFQAEVQQLLHLMIHSLYSNKDIFLRELISNASDAIDKLRFQSLQDESLLEGEGDLRIRVSVDKDARTITVADNGIGMTRDEVAENLGTIARSGTKAFLDQLTGDQQKDAKLIGQFGVGFYSAFVVAEHVTVHTRKAGLGAEHGVRWSSDGKGAYTLENEEVAERGTRVVLTLPESQSEYLDDWRLKGIIRRYSDHIDVPIQMPAQAEDKDEPEDEAEKAEAAETWETVNNTNALWMRPKSEISDDDYKAFYKHVAHDFDDPMVWLHNHVEGRQSYTSLLYIPKNPPFDLYEREPAHGIKLYVRRVFIMEDTEKLMPRYLRFVRGLVDSDDLPLNVSRELLQHNPLLDKIRSASVKRILDRLEKMAKNEPEQYAEFYGNFGKVLKEGVAEDFANRERIAKLLRFSTTQDENETPDVSLDDYIARMKEGQEAIYYVTAESFNAARNSPHLEVFRKKGVEVLLLPDPVDEWVITHLNEYDGKPLKSVAKGGLDLGELEDQAEKKAAEEATESHKDLLEKLKGALEDKVSEVRVSTRLTDSPACLVVGEYDFGMGMQRLLKAAGHAMPQGKPALEINIDHPIVQRMDTGLDDARFSDWAAVLYDQALLTEGGQLEDPAAFVKRVNALLTEQARAGEAKSNAARGD</sequence>
<evidence type="ECO:0000255" key="1">
    <source>
        <dbReference type="HAMAP-Rule" id="MF_00505"/>
    </source>
</evidence>
<dbReference type="EMBL" id="CP000453">
    <property type="protein sequence ID" value="ABI57349.1"/>
    <property type="molecule type" value="Genomic_DNA"/>
</dbReference>
<dbReference type="RefSeq" id="WP_011629743.1">
    <property type="nucleotide sequence ID" value="NC_008340.1"/>
</dbReference>
<dbReference type="SMR" id="Q0A738"/>
<dbReference type="KEGG" id="aeh:Mlg_2007"/>
<dbReference type="eggNOG" id="COG0326">
    <property type="taxonomic scope" value="Bacteria"/>
</dbReference>
<dbReference type="HOGENOM" id="CLU_006684_3_0_6"/>
<dbReference type="OrthoDB" id="9802640at2"/>
<dbReference type="Proteomes" id="UP000001962">
    <property type="component" value="Chromosome"/>
</dbReference>
<dbReference type="GO" id="GO:0005737">
    <property type="term" value="C:cytoplasm"/>
    <property type="evidence" value="ECO:0007669"/>
    <property type="project" value="UniProtKB-SubCell"/>
</dbReference>
<dbReference type="GO" id="GO:0005524">
    <property type="term" value="F:ATP binding"/>
    <property type="evidence" value="ECO:0007669"/>
    <property type="project" value="UniProtKB-UniRule"/>
</dbReference>
<dbReference type="GO" id="GO:0016887">
    <property type="term" value="F:ATP hydrolysis activity"/>
    <property type="evidence" value="ECO:0007669"/>
    <property type="project" value="InterPro"/>
</dbReference>
<dbReference type="GO" id="GO:0140662">
    <property type="term" value="F:ATP-dependent protein folding chaperone"/>
    <property type="evidence" value="ECO:0007669"/>
    <property type="project" value="InterPro"/>
</dbReference>
<dbReference type="GO" id="GO:0051082">
    <property type="term" value="F:unfolded protein binding"/>
    <property type="evidence" value="ECO:0007669"/>
    <property type="project" value="UniProtKB-UniRule"/>
</dbReference>
<dbReference type="CDD" id="cd16927">
    <property type="entry name" value="HATPase_Hsp90-like"/>
    <property type="match status" value="1"/>
</dbReference>
<dbReference type="FunFam" id="3.30.230.80:FF:000002">
    <property type="entry name" value="Molecular chaperone HtpG"/>
    <property type="match status" value="1"/>
</dbReference>
<dbReference type="FunFam" id="3.30.565.10:FF:000009">
    <property type="entry name" value="Molecular chaperone HtpG"/>
    <property type="match status" value="1"/>
</dbReference>
<dbReference type="Gene3D" id="3.30.230.80">
    <property type="match status" value="1"/>
</dbReference>
<dbReference type="Gene3D" id="3.40.50.11260">
    <property type="match status" value="1"/>
</dbReference>
<dbReference type="Gene3D" id="1.20.120.790">
    <property type="entry name" value="Heat shock protein 90, C-terminal domain"/>
    <property type="match status" value="1"/>
</dbReference>
<dbReference type="Gene3D" id="3.30.565.10">
    <property type="entry name" value="Histidine kinase-like ATPase, C-terminal domain"/>
    <property type="match status" value="1"/>
</dbReference>
<dbReference type="HAMAP" id="MF_00505">
    <property type="entry name" value="HSP90"/>
    <property type="match status" value="1"/>
</dbReference>
<dbReference type="InterPro" id="IPR036890">
    <property type="entry name" value="HATPase_C_sf"/>
</dbReference>
<dbReference type="InterPro" id="IPR019805">
    <property type="entry name" value="Heat_shock_protein_90_CS"/>
</dbReference>
<dbReference type="InterPro" id="IPR037196">
    <property type="entry name" value="HSP90_C"/>
</dbReference>
<dbReference type="InterPro" id="IPR001404">
    <property type="entry name" value="Hsp90_fam"/>
</dbReference>
<dbReference type="InterPro" id="IPR020575">
    <property type="entry name" value="Hsp90_N"/>
</dbReference>
<dbReference type="InterPro" id="IPR020568">
    <property type="entry name" value="Ribosomal_Su5_D2-typ_SF"/>
</dbReference>
<dbReference type="NCBIfam" id="NF003555">
    <property type="entry name" value="PRK05218.1"/>
    <property type="match status" value="1"/>
</dbReference>
<dbReference type="PANTHER" id="PTHR11528">
    <property type="entry name" value="HEAT SHOCK PROTEIN 90 FAMILY MEMBER"/>
    <property type="match status" value="1"/>
</dbReference>
<dbReference type="Pfam" id="PF13589">
    <property type="entry name" value="HATPase_c_3"/>
    <property type="match status" value="1"/>
</dbReference>
<dbReference type="Pfam" id="PF00183">
    <property type="entry name" value="HSP90"/>
    <property type="match status" value="1"/>
</dbReference>
<dbReference type="PIRSF" id="PIRSF002583">
    <property type="entry name" value="Hsp90"/>
    <property type="match status" value="1"/>
</dbReference>
<dbReference type="PRINTS" id="PR00775">
    <property type="entry name" value="HEATSHOCK90"/>
</dbReference>
<dbReference type="SMART" id="SM00387">
    <property type="entry name" value="HATPase_c"/>
    <property type="match status" value="1"/>
</dbReference>
<dbReference type="SUPFAM" id="SSF55874">
    <property type="entry name" value="ATPase domain of HSP90 chaperone/DNA topoisomerase II/histidine kinase"/>
    <property type="match status" value="1"/>
</dbReference>
<dbReference type="SUPFAM" id="SSF110942">
    <property type="entry name" value="HSP90 C-terminal domain"/>
    <property type="match status" value="1"/>
</dbReference>
<dbReference type="SUPFAM" id="SSF54211">
    <property type="entry name" value="Ribosomal protein S5 domain 2-like"/>
    <property type="match status" value="1"/>
</dbReference>
<dbReference type="PROSITE" id="PS00298">
    <property type="entry name" value="HSP90"/>
    <property type="match status" value="1"/>
</dbReference>
<protein>
    <recommendedName>
        <fullName evidence="1">Chaperone protein HtpG</fullName>
    </recommendedName>
    <alternativeName>
        <fullName evidence="1">Heat shock protein HtpG</fullName>
    </alternativeName>
    <alternativeName>
        <fullName evidence="1">High temperature protein G</fullName>
    </alternativeName>
</protein>
<reference key="1">
    <citation type="submission" date="2006-08" db="EMBL/GenBank/DDBJ databases">
        <title>Complete sequence of Alkalilimnicola ehrilichei MLHE-1.</title>
        <authorList>
            <person name="Copeland A."/>
            <person name="Lucas S."/>
            <person name="Lapidus A."/>
            <person name="Barry K."/>
            <person name="Detter J.C."/>
            <person name="Glavina del Rio T."/>
            <person name="Hammon N."/>
            <person name="Israni S."/>
            <person name="Dalin E."/>
            <person name="Tice H."/>
            <person name="Pitluck S."/>
            <person name="Sims D."/>
            <person name="Brettin T."/>
            <person name="Bruce D."/>
            <person name="Han C."/>
            <person name="Tapia R."/>
            <person name="Gilna P."/>
            <person name="Schmutz J."/>
            <person name="Larimer F."/>
            <person name="Land M."/>
            <person name="Hauser L."/>
            <person name="Kyrpides N."/>
            <person name="Mikhailova N."/>
            <person name="Oremland R.S."/>
            <person name="Hoeft S.E."/>
            <person name="Switzer-Blum J."/>
            <person name="Kulp T."/>
            <person name="King G."/>
            <person name="Tabita R."/>
            <person name="Witte B."/>
            <person name="Santini J.M."/>
            <person name="Basu P."/>
            <person name="Hollibaugh J.T."/>
            <person name="Xie G."/>
            <person name="Stolz J.F."/>
            <person name="Richardson P."/>
        </authorList>
    </citation>
    <scope>NUCLEOTIDE SEQUENCE [LARGE SCALE GENOMIC DNA]</scope>
    <source>
        <strain>ATCC BAA-1101 / DSM 17681 / MLHE-1</strain>
    </source>
</reference>
<name>HTPG_ALKEH</name>
<accession>Q0A738</accession>
<organism>
    <name type="scientific">Alkalilimnicola ehrlichii (strain ATCC BAA-1101 / DSM 17681 / MLHE-1)</name>
    <dbReference type="NCBI Taxonomy" id="187272"/>
    <lineage>
        <taxon>Bacteria</taxon>
        <taxon>Pseudomonadati</taxon>
        <taxon>Pseudomonadota</taxon>
        <taxon>Gammaproteobacteria</taxon>
        <taxon>Chromatiales</taxon>
        <taxon>Ectothiorhodospiraceae</taxon>
        <taxon>Alkalilimnicola</taxon>
    </lineage>
</organism>
<comment type="function">
    <text evidence="1">Molecular chaperone. Has ATPase activity.</text>
</comment>
<comment type="subunit">
    <text evidence="1">Homodimer.</text>
</comment>
<comment type="subcellular location">
    <subcellularLocation>
        <location evidence="1">Cytoplasm</location>
    </subcellularLocation>
</comment>
<comment type="similarity">
    <text evidence="1">Belongs to the heat shock protein 90 family.</text>
</comment>
<feature type="chain" id="PRO_1000014895" description="Chaperone protein HtpG">
    <location>
        <begin position="1"/>
        <end position="652"/>
    </location>
</feature>
<feature type="region of interest" description="A; substrate-binding" evidence="1">
    <location>
        <begin position="1"/>
        <end position="348"/>
    </location>
</feature>
<feature type="region of interest" description="B" evidence="1">
    <location>
        <begin position="349"/>
        <end position="565"/>
    </location>
</feature>
<feature type="region of interest" description="C" evidence="1">
    <location>
        <begin position="566"/>
        <end position="652"/>
    </location>
</feature>
<keyword id="KW-0067">ATP-binding</keyword>
<keyword id="KW-0143">Chaperone</keyword>
<keyword id="KW-0963">Cytoplasm</keyword>
<keyword id="KW-0547">Nucleotide-binding</keyword>
<keyword id="KW-1185">Reference proteome</keyword>
<keyword id="KW-0346">Stress response</keyword>
<gene>
    <name evidence="1" type="primary">htpG</name>
    <name type="ordered locus">Mlg_2007</name>
</gene>